<keyword id="KW-0002">3D-structure</keyword>
<keyword id="KW-0378">Hydrolase</keyword>
<keyword id="KW-1185">Reference proteome</keyword>
<organism>
    <name type="scientific">Pyrococcus furiosus (strain ATCC 43587 / DSM 3638 / JCM 8422 / Vc1)</name>
    <dbReference type="NCBI Taxonomy" id="186497"/>
    <lineage>
        <taxon>Archaea</taxon>
        <taxon>Methanobacteriati</taxon>
        <taxon>Methanobacteriota</taxon>
        <taxon>Thermococci</taxon>
        <taxon>Thermococcales</taxon>
        <taxon>Thermococcaceae</taxon>
        <taxon>Pyrococcus</taxon>
    </lineage>
</organism>
<dbReference type="EC" id="3.1.4.58" evidence="1 2"/>
<dbReference type="EMBL" id="AE009950">
    <property type="protein sequence ID" value="AAL80151.1"/>
    <property type="molecule type" value="Genomic_DNA"/>
</dbReference>
<dbReference type="PDB" id="2FYH">
    <property type="method" value="NMR"/>
    <property type="chains" value="A=1-184"/>
</dbReference>
<dbReference type="PDBsum" id="2FYH"/>
<dbReference type="BMRB" id="Q8U4Q3"/>
<dbReference type="SMR" id="Q8U4Q3"/>
<dbReference type="STRING" id="186497.PF0027"/>
<dbReference type="PaxDb" id="186497-PF0027"/>
<dbReference type="KEGG" id="pfu:PF0027"/>
<dbReference type="PATRIC" id="fig|186497.12.peg.29"/>
<dbReference type="eggNOG" id="arCOG01736">
    <property type="taxonomic scope" value="Archaea"/>
</dbReference>
<dbReference type="HOGENOM" id="CLU_081251_3_4_2"/>
<dbReference type="OrthoDB" id="44091at2157"/>
<dbReference type="PhylomeDB" id="Q8U4Q3"/>
<dbReference type="BRENDA" id="3.1.4.58">
    <property type="organism ID" value="5243"/>
</dbReference>
<dbReference type="BRENDA" id="6.5.1.B3">
    <property type="organism ID" value="5243"/>
</dbReference>
<dbReference type="EvolutionaryTrace" id="Q8U4Q3"/>
<dbReference type="Proteomes" id="UP000001013">
    <property type="component" value="Chromosome"/>
</dbReference>
<dbReference type="GO" id="GO:0004113">
    <property type="term" value="F:2',3'-cyclic-nucleotide 3'-phosphodiesterase activity"/>
    <property type="evidence" value="ECO:0007669"/>
    <property type="project" value="InterPro"/>
</dbReference>
<dbReference type="GO" id="GO:0008664">
    <property type="term" value="F:RNA 2',3'-cyclic 3'-phosphodiesterase activity"/>
    <property type="evidence" value="ECO:0007669"/>
    <property type="project" value="UniProtKB-EC"/>
</dbReference>
<dbReference type="FunFam" id="3.90.1140.10:FF:000009">
    <property type="entry name" value="RNA 2',3'-cyclic phosphodiesterase"/>
    <property type="match status" value="1"/>
</dbReference>
<dbReference type="Gene3D" id="3.90.1140.10">
    <property type="entry name" value="Cyclic phosphodiesterase"/>
    <property type="match status" value="1"/>
</dbReference>
<dbReference type="HAMAP" id="MF_01940">
    <property type="entry name" value="RNA_CPDase"/>
    <property type="match status" value="1"/>
</dbReference>
<dbReference type="InterPro" id="IPR009097">
    <property type="entry name" value="Cyclic_Pdiesterase"/>
</dbReference>
<dbReference type="InterPro" id="IPR014051">
    <property type="entry name" value="Phosphoesterase_HXTX"/>
</dbReference>
<dbReference type="InterPro" id="IPR004175">
    <property type="entry name" value="RNA_CPDase"/>
</dbReference>
<dbReference type="NCBIfam" id="TIGR02258">
    <property type="entry name" value="2_5_ligase"/>
    <property type="match status" value="1"/>
</dbReference>
<dbReference type="PANTHER" id="PTHR35561">
    <property type="entry name" value="RNA 2',3'-CYCLIC PHOSPHODIESTERASE"/>
    <property type="match status" value="1"/>
</dbReference>
<dbReference type="PANTHER" id="PTHR35561:SF1">
    <property type="entry name" value="RNA 2',3'-CYCLIC PHOSPHODIESTERASE"/>
    <property type="match status" value="1"/>
</dbReference>
<dbReference type="Pfam" id="PF02834">
    <property type="entry name" value="LigT_PEase"/>
    <property type="match status" value="2"/>
</dbReference>
<dbReference type="SUPFAM" id="SSF55144">
    <property type="entry name" value="LigT-like"/>
    <property type="match status" value="1"/>
</dbReference>
<accession>Q8U4Q3</accession>
<protein>
    <recommendedName>
        <fullName evidence="1">RNA 2',3'-cyclic phosphodiesterase</fullName>
        <shortName evidence="1">RNA 2',3'-CPDase</shortName>
        <ecNumber evidence="1 2">3.1.4.58</ecNumber>
    </recommendedName>
</protein>
<name>THPR_PYRFU</name>
<evidence type="ECO:0000255" key="1">
    <source>
        <dbReference type="HAMAP-Rule" id="MF_01940"/>
    </source>
</evidence>
<evidence type="ECO:0000269" key="2">
    <source>
    </source>
</evidence>
<evidence type="ECO:0000305" key="3">
    <source>
    </source>
</evidence>
<evidence type="ECO:0000312" key="4">
    <source>
        <dbReference type="EMBL" id="AAL80151.1"/>
    </source>
</evidence>
<evidence type="ECO:0007829" key="5">
    <source>
        <dbReference type="PDB" id="2FYH"/>
    </source>
</evidence>
<feature type="chain" id="PRO_0000431803" description="RNA 2',3'-cyclic phosphodiesterase">
    <location>
        <begin position="1"/>
        <end position="184"/>
    </location>
</feature>
<feature type="short sequence motif" description="HXTX 1" evidence="1 3">
    <location>
        <begin position="40"/>
        <end position="43"/>
    </location>
</feature>
<feature type="short sequence motif" description="HXTX 2" evidence="1 3">
    <location>
        <begin position="125"/>
        <end position="128"/>
    </location>
</feature>
<feature type="active site" description="Proton donor" evidence="1">
    <location>
        <position position="40"/>
    </location>
</feature>
<feature type="active site" description="Proton acceptor" evidence="1">
    <location>
        <position position="125"/>
    </location>
</feature>
<feature type="strand" evidence="5">
    <location>
        <begin position="2"/>
        <end position="7"/>
    </location>
</feature>
<feature type="helix" evidence="5">
    <location>
        <begin position="11"/>
        <end position="24"/>
    </location>
</feature>
<feature type="strand" evidence="5">
    <location>
        <begin position="26"/>
        <end position="29"/>
    </location>
</feature>
<feature type="strand" evidence="5">
    <location>
        <begin position="31"/>
        <end position="33"/>
    </location>
</feature>
<feature type="helix" evidence="5">
    <location>
        <begin position="36"/>
        <end position="38"/>
    </location>
</feature>
<feature type="strand" evidence="5">
    <location>
        <begin position="41"/>
        <end position="48"/>
    </location>
</feature>
<feature type="helix" evidence="5">
    <location>
        <begin position="53"/>
        <end position="67"/>
    </location>
</feature>
<feature type="strand" evidence="5">
    <location>
        <begin position="72"/>
        <end position="83"/>
    </location>
</feature>
<feature type="strand" evidence="5">
    <location>
        <begin position="86"/>
        <end position="96"/>
    </location>
</feature>
<feature type="helix" evidence="5">
    <location>
        <begin position="98"/>
        <end position="114"/>
    </location>
</feature>
<feature type="strand" evidence="5">
    <location>
        <begin position="125"/>
        <end position="131"/>
    </location>
</feature>
<feature type="helix" evidence="5">
    <location>
        <begin position="137"/>
        <end position="146"/>
    </location>
</feature>
<feature type="turn" evidence="5">
    <location>
        <begin position="147"/>
        <end position="149"/>
    </location>
</feature>
<feature type="strand" evidence="5">
    <location>
        <begin position="151"/>
        <end position="156"/>
    </location>
</feature>
<feature type="strand" evidence="5">
    <location>
        <begin position="159"/>
        <end position="168"/>
    </location>
</feature>
<feature type="strand" evidence="5">
    <location>
        <begin position="171"/>
        <end position="180"/>
    </location>
</feature>
<reference key="1">
    <citation type="journal article" date="1999" name="Genetics">
        <title>Divergence of the hyperthermophilic archaea Pyrococcus furiosus and P. horikoshii inferred from complete genomic sequences.</title>
        <authorList>
            <person name="Maeder D.L."/>
            <person name="Weiss R.B."/>
            <person name="Dunn D.M."/>
            <person name="Cherry J.L."/>
            <person name="Gonzalez J.M."/>
            <person name="DiRuggiero J."/>
            <person name="Robb F.T."/>
        </authorList>
    </citation>
    <scope>NUCLEOTIDE SEQUENCE [LARGE SCALE GENOMIC DNA]</scope>
    <source>
        <strain>ATCC 43587 / DSM 3638 / JCM 8422 / Vc1</strain>
    </source>
</reference>
<reference key="2">
    <citation type="journal article" date="2009" name="RNA">
        <title>Characterization of a heat-stable enzyme possessing GTP-dependent RNA ligase activity from a hyperthermophilic archaeon, Pyrococcus furiosus.</title>
        <authorList>
            <person name="Kanai A."/>
            <person name="Sato A."/>
            <person name="Fukuda Y."/>
            <person name="Okada K."/>
            <person name="Matsuda T."/>
            <person name="Sakamoto T."/>
            <person name="Muto Y."/>
            <person name="Yokoyama S."/>
            <person name="Kawai G."/>
            <person name="Tomita M."/>
        </authorList>
    </citation>
    <scope>FUNCTION</scope>
    <scope>CATALYTIC ACTIVITY</scope>
    <scope>STRUCTURE BY NMR</scope>
    <source>
        <strain>ATCC 43587 / DSM 3638 / JCM 8422 / Vc1</strain>
    </source>
</reference>
<comment type="function">
    <text evidence="2">Hydrolyzes RNA 2',3'-cyclic phosphodiester to an RNA 2'-phosphomonoester. In vitro, ligates 5' and 3' half-tRNA molecules with 2',3'-cyclic phosphate and 5'-hydroxyl termini, respectively, to the product containing the 2'-5' phosphodiester linkage. Ligase activity requires GTP, but GTP hydrolysis is not required for the reaction, which is reversible. Ligase activity is weak compared to the phosphodiesterase activity.</text>
</comment>
<comment type="catalytic activity">
    <reaction evidence="1 2">
        <text>a 3'-end 2',3'-cyclophospho-ribonucleotide-RNA + H2O = a 3'-end 2'-phospho-ribonucleotide-RNA + H(+)</text>
        <dbReference type="Rhea" id="RHEA:11828"/>
        <dbReference type="Rhea" id="RHEA-COMP:10464"/>
        <dbReference type="Rhea" id="RHEA-COMP:17353"/>
        <dbReference type="ChEBI" id="CHEBI:15377"/>
        <dbReference type="ChEBI" id="CHEBI:15378"/>
        <dbReference type="ChEBI" id="CHEBI:83064"/>
        <dbReference type="ChEBI" id="CHEBI:173113"/>
        <dbReference type="EC" id="3.1.4.58"/>
    </reaction>
</comment>
<comment type="similarity">
    <text evidence="1">Belongs to the 2H phosphoesterase superfamily. ThpR family.</text>
</comment>
<sequence>MRAFIAIDVSESVRDALVRAQDYIGSKEAKIKFVERENFHITLKFLGEITEEQAEEIKKILEKIAKKYKKHEVNVRGIGVFPNPNYVRVIWAGVENDEIIKKIAKEIDDELAKLGFKKEGNFVAHITLGRVKFVKDKLGLAMKLKELANEDFGSFIVEAIELKKSTLTPKGPIYETLARFELSE</sequence>
<proteinExistence type="evidence at protein level"/>
<gene>
    <name evidence="4" type="ordered locus">PF0027</name>
</gene>